<keyword id="KW-0413">Isomerase</keyword>
<keyword id="KW-0460">Magnesium</keyword>
<keyword id="KW-0479">Metal-binding</keyword>
<keyword id="KW-1185">Reference proteome</keyword>
<accession>B5EFW2</accession>
<gene>
    <name type="ordered locus">Gbem_2417</name>
</gene>
<dbReference type="EC" id="5.1.1.-"/>
<dbReference type="EMBL" id="CP001124">
    <property type="protein sequence ID" value="ACH39427.1"/>
    <property type="molecule type" value="Genomic_DNA"/>
</dbReference>
<dbReference type="RefSeq" id="WP_012530849.1">
    <property type="nucleotide sequence ID" value="NC_011146.1"/>
</dbReference>
<dbReference type="SMR" id="B5EFW2"/>
<dbReference type="STRING" id="404380.Gbem_2417"/>
<dbReference type="KEGG" id="gbm:Gbem_2417"/>
<dbReference type="eggNOG" id="COG4948">
    <property type="taxonomic scope" value="Bacteria"/>
</dbReference>
<dbReference type="HOGENOM" id="CLU_030273_4_1_7"/>
<dbReference type="OrthoDB" id="9775391at2"/>
<dbReference type="Proteomes" id="UP000008825">
    <property type="component" value="Chromosome"/>
</dbReference>
<dbReference type="GO" id="GO:0000287">
    <property type="term" value="F:magnesium ion binding"/>
    <property type="evidence" value="ECO:0000314"/>
    <property type="project" value="UniProtKB"/>
</dbReference>
<dbReference type="GO" id="GO:0016854">
    <property type="term" value="F:racemase and epimerase activity"/>
    <property type="evidence" value="ECO:0000314"/>
    <property type="project" value="UniProtKB"/>
</dbReference>
<dbReference type="GO" id="GO:0016855">
    <property type="term" value="F:racemase and epimerase activity, acting on amino acids and derivatives"/>
    <property type="evidence" value="ECO:0007669"/>
    <property type="project" value="InterPro"/>
</dbReference>
<dbReference type="GO" id="GO:0006518">
    <property type="term" value="P:peptide metabolic process"/>
    <property type="evidence" value="ECO:0000314"/>
    <property type="project" value="UniProtKB"/>
</dbReference>
<dbReference type="CDD" id="cd03319">
    <property type="entry name" value="L-Ala-DL-Glu_epimerase"/>
    <property type="match status" value="1"/>
</dbReference>
<dbReference type="FunFam" id="3.30.390.10:FF:000009">
    <property type="entry name" value="Hydrophobic dipeptide epimerase"/>
    <property type="match status" value="1"/>
</dbReference>
<dbReference type="Gene3D" id="3.20.20.120">
    <property type="entry name" value="Enolase-like C-terminal domain"/>
    <property type="match status" value="1"/>
</dbReference>
<dbReference type="Gene3D" id="3.30.390.10">
    <property type="entry name" value="Enolase-like, N-terminal domain"/>
    <property type="match status" value="1"/>
</dbReference>
<dbReference type="InterPro" id="IPR034603">
    <property type="entry name" value="Dipeptide_epimerase"/>
</dbReference>
<dbReference type="InterPro" id="IPR036849">
    <property type="entry name" value="Enolase-like_C_sf"/>
</dbReference>
<dbReference type="InterPro" id="IPR029017">
    <property type="entry name" value="Enolase-like_N"/>
</dbReference>
<dbReference type="InterPro" id="IPR029065">
    <property type="entry name" value="Enolase_C-like"/>
</dbReference>
<dbReference type="InterPro" id="IPR013342">
    <property type="entry name" value="Mandelate_racemase_C"/>
</dbReference>
<dbReference type="InterPro" id="IPR013341">
    <property type="entry name" value="Mandelate_racemase_N_dom"/>
</dbReference>
<dbReference type="PANTHER" id="PTHR48073:SF2">
    <property type="entry name" value="O-SUCCINYLBENZOATE SYNTHASE"/>
    <property type="match status" value="1"/>
</dbReference>
<dbReference type="PANTHER" id="PTHR48073">
    <property type="entry name" value="O-SUCCINYLBENZOATE SYNTHASE-RELATED"/>
    <property type="match status" value="1"/>
</dbReference>
<dbReference type="Pfam" id="PF13378">
    <property type="entry name" value="MR_MLE_C"/>
    <property type="match status" value="1"/>
</dbReference>
<dbReference type="Pfam" id="PF02746">
    <property type="entry name" value="MR_MLE_N"/>
    <property type="match status" value="1"/>
</dbReference>
<dbReference type="SFLD" id="SFLDS00001">
    <property type="entry name" value="Enolase"/>
    <property type="match status" value="1"/>
</dbReference>
<dbReference type="SFLD" id="SFLDG00180">
    <property type="entry name" value="muconate_cycloisomerase"/>
    <property type="match status" value="1"/>
</dbReference>
<dbReference type="SMART" id="SM00922">
    <property type="entry name" value="MR_MLE"/>
    <property type="match status" value="1"/>
</dbReference>
<dbReference type="SUPFAM" id="SSF51604">
    <property type="entry name" value="Enolase C-terminal domain-like"/>
    <property type="match status" value="1"/>
</dbReference>
<dbReference type="SUPFAM" id="SSF54826">
    <property type="entry name" value="Enolase N-terminal domain-like"/>
    <property type="match status" value="1"/>
</dbReference>
<evidence type="ECO:0000250" key="1"/>
<evidence type="ECO:0000269" key="2">
    <source>
    </source>
</evidence>
<evidence type="ECO:0000305" key="3"/>
<name>HYEP_CITBB</name>
<protein>
    <recommendedName>
        <fullName>Hydrophobic dipeptide epimerase</fullName>
        <ecNumber>5.1.1.-</ecNumber>
    </recommendedName>
    <alternativeName>
        <fullName>L-Hydrophobic-D/L-Hydrophobic epimerase</fullName>
    </alternativeName>
</protein>
<feature type="chain" id="PRO_0000429654" description="Hydrophobic dipeptide epimerase">
    <location>
        <begin position="1"/>
        <end position="368"/>
    </location>
</feature>
<feature type="binding site" evidence="1">
    <location>
        <position position="143"/>
    </location>
    <ligand>
        <name>substrate</name>
    </ligand>
</feature>
<feature type="binding site" evidence="1">
    <location>
        <begin position="168"/>
        <end position="170"/>
    </location>
    <ligand>
        <name>substrate</name>
    </ligand>
</feature>
<feature type="binding site" evidence="1">
    <location>
        <position position="197"/>
    </location>
    <ligand>
        <name>Mg(2+)</name>
        <dbReference type="ChEBI" id="CHEBI:18420"/>
    </ligand>
</feature>
<feature type="binding site" evidence="1">
    <location>
        <position position="225"/>
    </location>
    <ligand>
        <name>Mg(2+)</name>
        <dbReference type="ChEBI" id="CHEBI:18420"/>
    </ligand>
</feature>
<feature type="binding site" evidence="1">
    <location>
        <position position="253"/>
    </location>
    <ligand>
        <name>Mg(2+)</name>
        <dbReference type="ChEBI" id="CHEBI:18420"/>
    </ligand>
</feature>
<feature type="binding site" evidence="1">
    <location>
        <position position="277"/>
    </location>
    <ligand>
        <name>substrate</name>
    </ligand>
</feature>
<feature type="binding site" evidence="1">
    <location>
        <begin position="329"/>
        <end position="331"/>
    </location>
    <ligand>
        <name>substrate</name>
    </ligand>
</feature>
<reference key="1">
    <citation type="submission" date="2008-07" db="EMBL/GenBank/DDBJ databases">
        <title>Complete sequence of Geobacter bemidjiensis BEM.</title>
        <authorList>
            <consortium name="US DOE Joint Genome Institute"/>
            <person name="Lucas S."/>
            <person name="Copeland A."/>
            <person name="Lapidus A."/>
            <person name="Glavina del Rio T."/>
            <person name="Dalin E."/>
            <person name="Tice H."/>
            <person name="Bruce D."/>
            <person name="Goodwin L."/>
            <person name="Pitluck S."/>
            <person name="Kiss H."/>
            <person name="Brettin T."/>
            <person name="Detter J.C."/>
            <person name="Han C."/>
            <person name="Kuske C.R."/>
            <person name="Schmutz J."/>
            <person name="Larimer F."/>
            <person name="Land M."/>
            <person name="Hauser L."/>
            <person name="Kyrpides N."/>
            <person name="Lykidis A."/>
            <person name="Lovley D."/>
            <person name="Richardson P."/>
        </authorList>
    </citation>
    <scope>NUCLEOTIDE SEQUENCE [LARGE SCALE GENOMIC DNA]</scope>
    <source>
        <strain>ATCC BAA-1014 / DSM 16622 / JCM 12645 / Bem</strain>
    </source>
</reference>
<reference key="2">
    <citation type="journal article" date="2012" name="Proc. Natl. Acad. Sci. U.S.A.">
        <title>Homology models guide discovery of diverse enzyme specificities among dipeptide epimerases in the enolase superfamily.</title>
        <authorList>
            <person name="Lukk T."/>
            <person name="Sakai A."/>
            <person name="Kalyanaraman C."/>
            <person name="Brown S.D."/>
            <person name="Imker H.J."/>
            <person name="Song L."/>
            <person name="Fedorov A.A."/>
            <person name="Fedorov E.V."/>
            <person name="Toro R."/>
            <person name="Hillerich B."/>
            <person name="Seidel R."/>
            <person name="Patskovsky Y."/>
            <person name="Vetting M.W."/>
            <person name="Nair S.K."/>
            <person name="Babbitt P.C."/>
            <person name="Almo S.C."/>
            <person name="Gerlt J.A."/>
            <person name="Jacobson M.P."/>
        </authorList>
    </citation>
    <scope>FUNCTION</scope>
    <scope>COFACTOR</scope>
    <source>
        <strain>ATCC BAA-1014 / DSM 16622 / JCM 12645 / Bem</strain>
    </source>
</reference>
<comment type="function">
    <text evidence="2">Catalyzes the epimerization of various hydrophobic dipeptides, such as L-Ala-L-Phe. Has epimerase activity with L-Ala-L-Thr, L-Ala-L-Met, L-Ala-L-Tyr, as well as L-Phe-L-Met, L-Phe-L-Ser and L-Phe-L-Thr (in vitro).</text>
</comment>
<comment type="cofactor">
    <cofactor evidence="2">
        <name>Mg(2+)</name>
        <dbReference type="ChEBI" id="CHEBI:18420"/>
    </cofactor>
    <text evidence="2">Binds 1 Mg(2+) ion per subunit.</text>
</comment>
<comment type="miscellaneous">
    <text>Part of a large, functionally divergent protein family. Protein modeling and substrate docking was used to predict the substrate specificity, prior to biochemical analysis.</text>
</comment>
<comment type="similarity">
    <text evidence="3">Belongs to the mandelate racemase/muconate lactonizing enzyme family.</text>
</comment>
<sequence length="368" mass="38981">MDISFQIQDAVASVIRAPLASPFRIATGQHDELENVFLKLTTRDGVSGYGEAAVASHITGETVPGTLANLQNAAAALRGQTVDDAESACRQFAAAFAGNHAGLAALEMALLDLSSRVRGIPFYRLFAPVAALEPRLAFSTDITVVIGSLDEARATAREFASRGFKAFKIKIGRDEQLDLARVLAVHEIAPDSQIILDANMGFSAGSMLAFLDRLAAKGVRPVLLEQPVPKMDWDGLSEITAALTGSETLVCADESVGSLADARRAIDSNAVSAINVKFMKSGILEGAEIARLAASRGIRLMLGAMMESALAVTASAHFAAGLACFDYLDMDTTFFLKGELAHSPYLDEHGRFDLHDAGPGIGVEPRFS</sequence>
<organism>
    <name type="scientific">Citrifermentans bemidjiense (strain ATCC BAA-1014 / DSM 16622 / JCM 12645 / Bem)</name>
    <name type="common">Geobacter bemidjiensis</name>
    <dbReference type="NCBI Taxonomy" id="404380"/>
    <lineage>
        <taxon>Bacteria</taxon>
        <taxon>Pseudomonadati</taxon>
        <taxon>Thermodesulfobacteriota</taxon>
        <taxon>Desulfuromonadia</taxon>
        <taxon>Geobacterales</taxon>
        <taxon>Geobacteraceae</taxon>
        <taxon>Citrifermentans</taxon>
    </lineage>
</organism>
<proteinExistence type="inferred from homology"/>